<feature type="chain" id="PRO_0000129507" description="Defective in cullin neddylation protein 1">
    <location>
        <begin position="1"/>
        <end position="295"/>
    </location>
</feature>
<feature type="domain" description="UBA-like">
    <location>
        <begin position="8"/>
        <end position="45"/>
    </location>
</feature>
<feature type="domain" description="DCUN1" evidence="1">
    <location>
        <begin position="60"/>
        <end position="272"/>
    </location>
</feature>
<feature type="splice variant" id="VSP_015319" description="In isoform b." evidence="3">
    <original>MNRLKSDQKTKLRQFVQWTQVTEAVSLNFLAKANWNIEYAMTLYFDNPNLFAGSTPQPSVDRSN</original>
    <variation>MNRLKSDQKTK</variation>
    <location>
        <begin position="1"/>
        <end position="64"/>
    </location>
</feature>
<reference key="1">
    <citation type="journal article" date="1998" name="Science">
        <title>Genome sequence of the nematode C. elegans: a platform for investigating biology.</title>
        <authorList>
            <consortium name="The C. elegans sequencing consortium"/>
        </authorList>
    </citation>
    <scope>NUCLEOTIDE SEQUENCE [LARGE SCALE GENOMIC DNA]</scope>
    <scope>ALTERNATIVE SPLICING</scope>
    <source>
        <strain>Bristol N2</strain>
    </source>
</reference>
<reference key="2">
    <citation type="journal article" date="2005" name="Nature">
        <title>The conserved protein DCN-1/Dcn1p is required for cullin neddylation in C. elegans and S. cerevisiae.</title>
        <authorList>
            <person name="Kurz T."/>
            <person name="Oezlue N."/>
            <person name="Rudolf F."/>
            <person name="O'Rourke S.M."/>
            <person name="Luke B."/>
            <person name="Hofmann K."/>
            <person name="Hyman A.A."/>
            <person name="Bowerman B."/>
            <person name="Peter M."/>
        </authorList>
    </citation>
    <scope>FUNCTION</scope>
    <scope>ALTERNATIVE SPLICING</scope>
    <scope>SUBCELLULAR LOCATION</scope>
    <scope>INTERACTION WITH CUL-3; NED-8 AND UBIQUITIN</scope>
</reference>
<keyword id="KW-0025">Alternative splicing</keyword>
<keyword id="KW-0539">Nucleus</keyword>
<keyword id="KW-1185">Reference proteome</keyword>
<keyword id="KW-0833">Ubl conjugation pathway</keyword>
<sequence>MNRLKSDQKTKLRQFVQWTQVTEAVSLNFLAKANWNIEYAMTLYFDNPNLFAGSTPQPSVDRSNIERLFNQYVDPKDKVGEKRMGPHGINRLLTDLGYEATDRRVLVLAWKFTAQTQCEFSLDEWVKGMTALQADTVQNLRQRIDSINSGLESDKAKFHELYLFAFNYAKSAACRNLDLETAICCWDVLFGQRSTIMTQWIDFLWAQENAAASRLAQNVGASNAKQFKSVWISRDTWNLFWDFILLSKPDLSDYDDEGAWPVLIDQFVDYCRENLNYPKPGNASNDQQMETPSYY</sequence>
<evidence type="ECO:0000255" key="1">
    <source>
        <dbReference type="PROSITE-ProRule" id="PRU00574"/>
    </source>
</evidence>
<evidence type="ECO:0000269" key="2">
    <source>
    </source>
</evidence>
<evidence type="ECO:0000305" key="3"/>
<proteinExistence type="evidence at protein level"/>
<protein>
    <recommendedName>
        <fullName>Defective in cullin neddylation protein 1</fullName>
    </recommendedName>
</protein>
<gene>
    <name type="primary">dcn-1</name>
    <name type="ORF">H38K22.2</name>
</gene>
<accession>Q9U3C8</accession>
<accession>Q9U3C9</accession>
<comment type="function">
    <text evidence="2">Required for neddylation of cullin components of SCF-type E3 ubiquitin ligase complexes. Neddylation of cullins play an essential role in the regulation of SCF-type complexes activity. Does not act by preventing deneddylation, but rather facilitates neddylation, possibly by acting with rbx-1 to recruit the Nedd8-charged E2 enzyme to the cullin component of SCF-type complexes.</text>
</comment>
<comment type="subunit">
    <text evidence="2">Interacts with the cullin cul-3. Interacts with ubiquitin via its UBA-like domain. Interacts with ned-8/nedd8.</text>
</comment>
<comment type="subcellular location">
    <subcellularLocation>
        <location evidence="2">Nucleus</location>
    </subcellularLocation>
</comment>
<comment type="alternative products">
    <event type="alternative splicing"/>
    <isoform>
        <id>Q9U3C8-1</id>
        <name>a</name>
        <sequence type="displayed"/>
    </isoform>
    <isoform>
        <id>Q9U3C8-2</id>
        <name>b</name>
        <sequence type="described" ref="VSP_015319"/>
    </isoform>
</comment>
<organism>
    <name type="scientific">Caenorhabditis elegans</name>
    <dbReference type="NCBI Taxonomy" id="6239"/>
    <lineage>
        <taxon>Eukaryota</taxon>
        <taxon>Metazoa</taxon>
        <taxon>Ecdysozoa</taxon>
        <taxon>Nematoda</taxon>
        <taxon>Chromadorea</taxon>
        <taxon>Rhabditida</taxon>
        <taxon>Rhabditina</taxon>
        <taxon>Rhabditomorpha</taxon>
        <taxon>Rhabditoidea</taxon>
        <taxon>Rhabditidae</taxon>
        <taxon>Peloderinae</taxon>
        <taxon>Caenorhabditis</taxon>
    </lineage>
</organism>
<name>DCN1_CAEEL</name>
<dbReference type="EMBL" id="AL024499">
    <property type="protein sequence ID" value="CAB54261.2"/>
    <property type="molecule type" value="Genomic_DNA"/>
</dbReference>
<dbReference type="EMBL" id="AL024499">
    <property type="protein sequence ID" value="CAB54260.2"/>
    <property type="molecule type" value="Genomic_DNA"/>
</dbReference>
<dbReference type="PIR" id="T23140">
    <property type="entry name" value="T23140"/>
</dbReference>
<dbReference type="PIR" id="T23141">
    <property type="entry name" value="T23141"/>
</dbReference>
<dbReference type="RefSeq" id="NP_001379250.1">
    <molecule id="Q9U3C8-2"/>
    <property type="nucleotide sequence ID" value="NM_001393320.1"/>
</dbReference>
<dbReference type="RefSeq" id="NP_497866.2">
    <molecule id="Q9U3C8-1"/>
    <property type="nucleotide sequence ID" value="NM_065465.5"/>
</dbReference>
<dbReference type="RefSeq" id="NP_497867.2">
    <property type="nucleotide sequence ID" value="NM_065466.5"/>
</dbReference>
<dbReference type="SMR" id="Q9U3C8"/>
<dbReference type="BioGRID" id="40792">
    <property type="interactions" value="14"/>
</dbReference>
<dbReference type="FunCoup" id="Q9U3C8">
    <property type="interactions" value="2784"/>
</dbReference>
<dbReference type="IntAct" id="Q9U3C8">
    <property type="interactions" value="2"/>
</dbReference>
<dbReference type="STRING" id="6239.H38K22.2a.1"/>
<dbReference type="PaxDb" id="6239-H38K22.2a"/>
<dbReference type="PeptideAtlas" id="Q9U3C8"/>
<dbReference type="EnsemblMetazoa" id="H38K22.2a.1">
    <molecule id="Q9U3C8-1"/>
    <property type="protein sequence ID" value="H38K22.2a.1"/>
    <property type="gene ID" value="WBGene00010428"/>
</dbReference>
<dbReference type="EnsemblMetazoa" id="H38K22.2a.2">
    <molecule id="Q9U3C8-1"/>
    <property type="protein sequence ID" value="H38K22.2a.2"/>
    <property type="gene ID" value="WBGene00010428"/>
</dbReference>
<dbReference type="EnsemblMetazoa" id="H38K22.2b.1">
    <molecule id="Q9U3C8-2"/>
    <property type="protein sequence ID" value="H38K22.2b.1"/>
    <property type="gene ID" value="WBGene00010428"/>
</dbReference>
<dbReference type="GeneID" id="175556"/>
<dbReference type="KEGG" id="cel:CELE_H38K22.2"/>
<dbReference type="UCSC" id="H38K22.2a">
    <molecule id="Q9U3C8-1"/>
    <property type="organism name" value="c. elegans"/>
</dbReference>
<dbReference type="AGR" id="WB:WBGene00010428"/>
<dbReference type="CTD" id="175556"/>
<dbReference type="WormBase" id="H38K22.2a">
    <molecule id="Q9U3C8-1"/>
    <property type="protein sequence ID" value="CE33527"/>
    <property type="gene ID" value="WBGene00010428"/>
    <property type="gene designation" value="dcn-1"/>
</dbReference>
<dbReference type="WormBase" id="H38K22.2b">
    <molecule id="Q9U3C8-2"/>
    <property type="protein sequence ID" value="CE33528"/>
    <property type="gene ID" value="WBGene00010428"/>
    <property type="gene designation" value="dcn-1"/>
</dbReference>
<dbReference type="eggNOG" id="KOG3077">
    <property type="taxonomic scope" value="Eukaryota"/>
</dbReference>
<dbReference type="GeneTree" id="ENSGT00940000168836"/>
<dbReference type="InParanoid" id="Q9U3C8"/>
<dbReference type="OMA" id="LWCKFLQ"/>
<dbReference type="OrthoDB" id="286637at2759"/>
<dbReference type="PhylomeDB" id="Q9U3C8"/>
<dbReference type="Reactome" id="R-CEL-8951664">
    <property type="pathway name" value="Neddylation"/>
</dbReference>
<dbReference type="PRO" id="PR:Q9U3C8"/>
<dbReference type="Proteomes" id="UP000001940">
    <property type="component" value="Chromosome III"/>
</dbReference>
<dbReference type="Bgee" id="WBGene00010428">
    <property type="expression patterns" value="Expressed in embryo and 4 other cell types or tissues"/>
</dbReference>
<dbReference type="GO" id="GO:0005737">
    <property type="term" value="C:cytoplasm"/>
    <property type="evidence" value="ECO:0000314"/>
    <property type="project" value="UniProtKB"/>
</dbReference>
<dbReference type="GO" id="GO:0005634">
    <property type="term" value="C:nucleus"/>
    <property type="evidence" value="ECO:0000314"/>
    <property type="project" value="UniProtKB"/>
</dbReference>
<dbReference type="GO" id="GO:0000151">
    <property type="term" value="C:ubiquitin ligase complex"/>
    <property type="evidence" value="ECO:0000318"/>
    <property type="project" value="GO_Central"/>
</dbReference>
<dbReference type="GO" id="GO:0097602">
    <property type="term" value="F:cullin family protein binding"/>
    <property type="evidence" value="ECO:0000318"/>
    <property type="project" value="GO_Central"/>
</dbReference>
<dbReference type="GO" id="GO:0043130">
    <property type="term" value="F:ubiquitin binding"/>
    <property type="evidence" value="ECO:0000314"/>
    <property type="project" value="WormBase"/>
</dbReference>
<dbReference type="GO" id="GO:0031624">
    <property type="term" value="F:ubiquitin conjugating enzyme binding"/>
    <property type="evidence" value="ECO:0000318"/>
    <property type="project" value="GO_Central"/>
</dbReference>
<dbReference type="GO" id="GO:0032182">
    <property type="term" value="F:ubiquitin-like protein binding"/>
    <property type="evidence" value="ECO:0000318"/>
    <property type="project" value="GO_Central"/>
</dbReference>
<dbReference type="GO" id="GO:0030953">
    <property type="term" value="P:astral microtubule organization"/>
    <property type="evidence" value="ECO:0000315"/>
    <property type="project" value="WormBase"/>
</dbReference>
<dbReference type="GO" id="GO:0040001">
    <property type="term" value="P:establishment of mitotic spindle localization"/>
    <property type="evidence" value="ECO:0000315"/>
    <property type="project" value="WormBase"/>
</dbReference>
<dbReference type="GO" id="GO:0030163">
    <property type="term" value="P:protein catabolic process"/>
    <property type="evidence" value="ECO:0000315"/>
    <property type="project" value="WormBase"/>
</dbReference>
<dbReference type="GO" id="GO:0045116">
    <property type="term" value="P:protein neddylation"/>
    <property type="evidence" value="ECO:0000315"/>
    <property type="project" value="UniProtKB"/>
</dbReference>
<dbReference type="CDD" id="cd14350">
    <property type="entry name" value="UBA_DCNL"/>
    <property type="match status" value="1"/>
</dbReference>
<dbReference type="FunFam" id="1.10.238.10:FF:000030">
    <property type="entry name" value="DCN1-like protein"/>
    <property type="match status" value="1"/>
</dbReference>
<dbReference type="FunFam" id="1.10.238.200:FF:000004">
    <property type="entry name" value="Defective in cullin neddylation protein"/>
    <property type="match status" value="1"/>
</dbReference>
<dbReference type="FunFam" id="1.10.8.10:FF:000124">
    <property type="entry name" value="Defective in cullin neddylation protein 1"/>
    <property type="match status" value="1"/>
</dbReference>
<dbReference type="Gene3D" id="1.10.238.200">
    <property type="entry name" value="Cullin, PONY binding domain"/>
    <property type="match status" value="1"/>
</dbReference>
<dbReference type="Gene3D" id="1.10.8.10">
    <property type="entry name" value="DNA helicase RuvA subunit, C-terminal domain"/>
    <property type="match status" value="1"/>
</dbReference>
<dbReference type="Gene3D" id="1.10.238.10">
    <property type="entry name" value="EF-hand"/>
    <property type="match status" value="1"/>
</dbReference>
<dbReference type="InterPro" id="IPR014764">
    <property type="entry name" value="DCN-prot"/>
</dbReference>
<dbReference type="InterPro" id="IPR042460">
    <property type="entry name" value="DCN1-like_PONY"/>
</dbReference>
<dbReference type="InterPro" id="IPR005176">
    <property type="entry name" value="PONY_dom"/>
</dbReference>
<dbReference type="InterPro" id="IPR009060">
    <property type="entry name" value="UBA-like_sf"/>
</dbReference>
<dbReference type="PANTHER" id="PTHR12281:SF32">
    <property type="entry name" value="DCN1-LIKE PROTEIN"/>
    <property type="match status" value="1"/>
</dbReference>
<dbReference type="PANTHER" id="PTHR12281">
    <property type="entry name" value="RP42 RELATED"/>
    <property type="match status" value="1"/>
</dbReference>
<dbReference type="Pfam" id="PF03556">
    <property type="entry name" value="Cullin_binding"/>
    <property type="match status" value="1"/>
</dbReference>
<dbReference type="Pfam" id="PF14555">
    <property type="entry name" value="UBA_4"/>
    <property type="match status" value="1"/>
</dbReference>
<dbReference type="SUPFAM" id="SSF46934">
    <property type="entry name" value="UBA-like"/>
    <property type="match status" value="1"/>
</dbReference>
<dbReference type="PROSITE" id="PS51229">
    <property type="entry name" value="DCUN1"/>
    <property type="match status" value="1"/>
</dbReference>